<evidence type="ECO:0000255" key="1">
    <source>
        <dbReference type="HAMAP-Rule" id="MF_00129"/>
    </source>
</evidence>
<dbReference type="EMBL" id="CP000557">
    <property type="protein sequence ID" value="ABO68774.1"/>
    <property type="molecule type" value="Genomic_DNA"/>
</dbReference>
<dbReference type="RefSeq" id="WP_008880827.1">
    <property type="nucleotide sequence ID" value="NC_009328.1"/>
</dbReference>
<dbReference type="SMR" id="A4ITX0"/>
<dbReference type="GeneID" id="87622461"/>
<dbReference type="KEGG" id="gtn:GTNG_3439"/>
<dbReference type="eggNOG" id="COG0445">
    <property type="taxonomic scope" value="Bacteria"/>
</dbReference>
<dbReference type="HOGENOM" id="CLU_007831_2_2_9"/>
<dbReference type="Proteomes" id="UP000001578">
    <property type="component" value="Chromosome"/>
</dbReference>
<dbReference type="GO" id="GO:0005829">
    <property type="term" value="C:cytosol"/>
    <property type="evidence" value="ECO:0007669"/>
    <property type="project" value="TreeGrafter"/>
</dbReference>
<dbReference type="GO" id="GO:0050660">
    <property type="term" value="F:flavin adenine dinucleotide binding"/>
    <property type="evidence" value="ECO:0007669"/>
    <property type="project" value="UniProtKB-UniRule"/>
</dbReference>
<dbReference type="GO" id="GO:0030488">
    <property type="term" value="P:tRNA methylation"/>
    <property type="evidence" value="ECO:0007669"/>
    <property type="project" value="TreeGrafter"/>
</dbReference>
<dbReference type="GO" id="GO:0002098">
    <property type="term" value="P:tRNA wobble uridine modification"/>
    <property type="evidence" value="ECO:0007669"/>
    <property type="project" value="InterPro"/>
</dbReference>
<dbReference type="FunFam" id="1.10.10.1800:FF:000001">
    <property type="entry name" value="tRNA uridine 5-carboxymethylaminomethyl modification enzyme MnmG"/>
    <property type="match status" value="1"/>
</dbReference>
<dbReference type="FunFam" id="1.10.150.570:FF:000001">
    <property type="entry name" value="tRNA uridine 5-carboxymethylaminomethyl modification enzyme MnmG"/>
    <property type="match status" value="1"/>
</dbReference>
<dbReference type="FunFam" id="3.50.50.60:FF:000002">
    <property type="entry name" value="tRNA uridine 5-carboxymethylaminomethyl modification enzyme MnmG"/>
    <property type="match status" value="1"/>
</dbReference>
<dbReference type="FunFam" id="3.50.50.60:FF:000063">
    <property type="entry name" value="tRNA uridine 5-carboxymethylaminomethyl modification enzyme MnmG"/>
    <property type="match status" value="1"/>
</dbReference>
<dbReference type="Gene3D" id="3.50.50.60">
    <property type="entry name" value="FAD/NAD(P)-binding domain"/>
    <property type="match status" value="2"/>
</dbReference>
<dbReference type="Gene3D" id="1.10.150.570">
    <property type="entry name" value="GidA associated domain, C-terminal subdomain"/>
    <property type="match status" value="1"/>
</dbReference>
<dbReference type="Gene3D" id="1.10.10.1800">
    <property type="entry name" value="tRNA uridine 5-carboxymethylaminomethyl modification enzyme MnmG/GidA"/>
    <property type="match status" value="1"/>
</dbReference>
<dbReference type="HAMAP" id="MF_00129">
    <property type="entry name" value="MnmG_GidA"/>
    <property type="match status" value="1"/>
</dbReference>
<dbReference type="InterPro" id="IPR036188">
    <property type="entry name" value="FAD/NAD-bd_sf"/>
</dbReference>
<dbReference type="InterPro" id="IPR049312">
    <property type="entry name" value="GIDA_C_N"/>
</dbReference>
<dbReference type="InterPro" id="IPR004416">
    <property type="entry name" value="MnmG"/>
</dbReference>
<dbReference type="InterPro" id="IPR002218">
    <property type="entry name" value="MnmG-rel"/>
</dbReference>
<dbReference type="InterPro" id="IPR020595">
    <property type="entry name" value="MnmG-rel_CS"/>
</dbReference>
<dbReference type="InterPro" id="IPR026904">
    <property type="entry name" value="MnmG_C"/>
</dbReference>
<dbReference type="InterPro" id="IPR047001">
    <property type="entry name" value="MnmG_C_subdom"/>
</dbReference>
<dbReference type="InterPro" id="IPR044920">
    <property type="entry name" value="MnmG_C_subdom_sf"/>
</dbReference>
<dbReference type="InterPro" id="IPR040131">
    <property type="entry name" value="MnmG_N"/>
</dbReference>
<dbReference type="NCBIfam" id="TIGR00136">
    <property type="entry name" value="mnmG_gidA"/>
    <property type="match status" value="1"/>
</dbReference>
<dbReference type="PANTHER" id="PTHR11806">
    <property type="entry name" value="GLUCOSE INHIBITED DIVISION PROTEIN A"/>
    <property type="match status" value="1"/>
</dbReference>
<dbReference type="PANTHER" id="PTHR11806:SF0">
    <property type="entry name" value="PROTEIN MTO1 HOMOLOG, MITOCHONDRIAL"/>
    <property type="match status" value="1"/>
</dbReference>
<dbReference type="Pfam" id="PF01134">
    <property type="entry name" value="GIDA"/>
    <property type="match status" value="1"/>
</dbReference>
<dbReference type="Pfam" id="PF21680">
    <property type="entry name" value="GIDA_C_1st"/>
    <property type="match status" value="1"/>
</dbReference>
<dbReference type="Pfam" id="PF13932">
    <property type="entry name" value="SAM_GIDA_C"/>
    <property type="match status" value="1"/>
</dbReference>
<dbReference type="PRINTS" id="PR00411">
    <property type="entry name" value="PNDRDTASEI"/>
</dbReference>
<dbReference type="SMART" id="SM01228">
    <property type="entry name" value="GIDA_assoc_3"/>
    <property type="match status" value="1"/>
</dbReference>
<dbReference type="SUPFAM" id="SSF51905">
    <property type="entry name" value="FAD/NAD(P)-binding domain"/>
    <property type="match status" value="1"/>
</dbReference>
<dbReference type="PROSITE" id="PS01280">
    <property type="entry name" value="GIDA_1"/>
    <property type="match status" value="1"/>
</dbReference>
<dbReference type="PROSITE" id="PS01281">
    <property type="entry name" value="GIDA_2"/>
    <property type="match status" value="1"/>
</dbReference>
<name>MNMG_GEOTN</name>
<reference key="1">
    <citation type="journal article" date="2007" name="Proc. Natl. Acad. Sci. U.S.A.">
        <title>Genome and proteome of long-chain alkane degrading Geobacillus thermodenitrificans NG80-2 isolated from a deep-subsurface oil reservoir.</title>
        <authorList>
            <person name="Feng L."/>
            <person name="Wang W."/>
            <person name="Cheng J."/>
            <person name="Ren Y."/>
            <person name="Zhao G."/>
            <person name="Gao C."/>
            <person name="Tang Y."/>
            <person name="Liu X."/>
            <person name="Han W."/>
            <person name="Peng X."/>
            <person name="Liu R."/>
            <person name="Wang L."/>
        </authorList>
    </citation>
    <scope>NUCLEOTIDE SEQUENCE [LARGE SCALE GENOMIC DNA]</scope>
    <source>
        <strain>NG80-2</strain>
    </source>
</reference>
<comment type="function">
    <text evidence="1">NAD-binding protein involved in the addition of a carboxymethylaminomethyl (cmnm) group at the wobble position (U34) of certain tRNAs, forming tRNA-cmnm(5)s(2)U34.</text>
</comment>
<comment type="cofactor">
    <cofactor evidence="1">
        <name>FAD</name>
        <dbReference type="ChEBI" id="CHEBI:57692"/>
    </cofactor>
</comment>
<comment type="subunit">
    <text evidence="1">Homodimer. Heterotetramer of two MnmE and two MnmG subunits.</text>
</comment>
<comment type="subcellular location">
    <subcellularLocation>
        <location evidence="1">Cytoplasm</location>
    </subcellularLocation>
</comment>
<comment type="similarity">
    <text evidence="1">Belongs to the MnmG family.</text>
</comment>
<organism>
    <name type="scientific">Geobacillus thermodenitrificans (strain NG80-2)</name>
    <dbReference type="NCBI Taxonomy" id="420246"/>
    <lineage>
        <taxon>Bacteria</taxon>
        <taxon>Bacillati</taxon>
        <taxon>Bacillota</taxon>
        <taxon>Bacilli</taxon>
        <taxon>Bacillales</taxon>
        <taxon>Anoxybacillaceae</taxon>
        <taxon>Geobacillus</taxon>
    </lineage>
</organism>
<gene>
    <name evidence="1" type="primary">mnmG</name>
    <name evidence="1" type="synonym">gidA</name>
    <name type="ordered locus">GTNG_3439</name>
</gene>
<proteinExistence type="inferred from homology"/>
<accession>A4ITX0</accession>
<protein>
    <recommendedName>
        <fullName evidence="1">tRNA uridine 5-carboxymethylaminomethyl modification enzyme MnmG</fullName>
    </recommendedName>
    <alternativeName>
        <fullName evidence="1">Glucose-inhibited division protein A</fullName>
    </alternativeName>
</protein>
<keyword id="KW-0963">Cytoplasm</keyword>
<keyword id="KW-0274">FAD</keyword>
<keyword id="KW-0285">Flavoprotein</keyword>
<keyword id="KW-0520">NAD</keyword>
<keyword id="KW-0819">tRNA processing</keyword>
<feature type="chain" id="PRO_1000016604" description="tRNA uridine 5-carboxymethylaminomethyl modification enzyme MnmG">
    <location>
        <begin position="1"/>
        <end position="629"/>
    </location>
</feature>
<feature type="binding site" evidence="1">
    <location>
        <begin position="14"/>
        <end position="19"/>
    </location>
    <ligand>
        <name>FAD</name>
        <dbReference type="ChEBI" id="CHEBI:57692"/>
    </ligand>
</feature>
<feature type="binding site" evidence="1">
    <location>
        <position position="126"/>
    </location>
    <ligand>
        <name>FAD</name>
        <dbReference type="ChEBI" id="CHEBI:57692"/>
    </ligand>
</feature>
<feature type="binding site" evidence="1">
    <location>
        <position position="181"/>
    </location>
    <ligand>
        <name>FAD</name>
        <dbReference type="ChEBI" id="CHEBI:57692"/>
    </ligand>
</feature>
<feature type="binding site" evidence="1">
    <location>
        <begin position="273"/>
        <end position="287"/>
    </location>
    <ligand>
        <name>NAD(+)</name>
        <dbReference type="ChEBI" id="CHEBI:57540"/>
    </ligand>
</feature>
<feature type="binding site" evidence="1">
    <location>
        <position position="370"/>
    </location>
    <ligand>
        <name>FAD</name>
        <dbReference type="ChEBI" id="CHEBI:57692"/>
    </ligand>
</feature>
<sequence length="629" mass="70354">MEYHGGSYDVIVIGAGHAGCEAALASARIGAKTLVITLNLDMIAFMPCNPSIGGPAKGIVVREIDALGGEMGKNIDKTYIQIRMLNTGKGPAVRALRAQADKVLYQREMKKTLENQKNLTLLQGKVERLIVEDGVCKGVITQTGAHYYAKAVVITTGTFLRGEIIIGDIKYSSGPNNQQPSIKLSEHLEELGFELVRFKTGTPPRVNSRTIDYSKTEIQPGDEEPRAFSYETTKYITDQLPCWLTYTTEETHRIIDENLHLSPMYSGMIKGTGPRYCPSIEDKVVRFHDKPRHQIFLEPEGRETEEVYVQGLSTSLPEHIQRKLLETIPGLEKAQLMRAGYAIEYDAIVPTQLWPTLETKLVKNLYTAGQINGTSGYEEAAGQGIMAGINAAHRALGREEIILSRSDAYIGVLIDDLVTKGTNEPYRLLTSRAEYRLLLRHDNADLRLTELGYRIGLISEERYQAFLAKKEAIEREKKRLQTVIIKPTPEVQEVIRQAGGSELKDGIRAADLLRRPEMTYEHIQKLAPADEDIAPEVAEQVEIQIKYEGYIQKSLQEVERLKKMENKKIPEDIDYDAIQGLATEARQKLKQVRPLSIAQASRISGVNPADISILLVYLEQGRIARVSNE</sequence>